<evidence type="ECO:0000250" key="1"/>
<evidence type="ECO:0000255" key="2">
    <source>
        <dbReference type="PROSITE-ProRule" id="PRU00686"/>
    </source>
</evidence>
<evidence type="ECO:0000305" key="3"/>
<proteinExistence type="inferred from homology"/>
<gene>
    <name type="primary">GLRX</name>
    <name type="synonym">GRX</name>
</gene>
<accession>P79764</accession>
<protein>
    <recommendedName>
        <fullName>Glutaredoxin-1</fullName>
    </recommendedName>
    <alternativeName>
        <fullName>Thioltransferase-1</fullName>
        <shortName>TTase-1</shortName>
    </alternativeName>
</protein>
<comment type="function">
    <text>Has a glutathione-disulfide oxidoreductase activity in the presence of NADPH and glutathione reductase. Reduces low molecular weight disulfides and proteins.</text>
</comment>
<comment type="subcellular location">
    <subcellularLocation>
        <location>Cytoplasm</location>
    </subcellularLocation>
</comment>
<comment type="similarity">
    <text evidence="3">Belongs to the glutaredoxin family.</text>
</comment>
<sequence length="101" mass="11397">MVDSFVQSKLRDNKVTLFVKGSCPYCKNAIVLLKEFNFLPGCLEVVDITGMDDIQDYFQKTTGQRTVPRVFIGTKCIGGFSDLQKMEQQLPMMLRQIGALV</sequence>
<organism>
    <name type="scientific">Gallus gallus</name>
    <name type="common">Chicken</name>
    <dbReference type="NCBI Taxonomy" id="9031"/>
    <lineage>
        <taxon>Eukaryota</taxon>
        <taxon>Metazoa</taxon>
        <taxon>Chordata</taxon>
        <taxon>Craniata</taxon>
        <taxon>Vertebrata</taxon>
        <taxon>Euteleostomi</taxon>
        <taxon>Archelosauria</taxon>
        <taxon>Archosauria</taxon>
        <taxon>Dinosauria</taxon>
        <taxon>Saurischia</taxon>
        <taxon>Theropoda</taxon>
        <taxon>Coelurosauria</taxon>
        <taxon>Aves</taxon>
        <taxon>Neognathae</taxon>
        <taxon>Galloanserae</taxon>
        <taxon>Galliformes</taxon>
        <taxon>Phasianidae</taxon>
        <taxon>Phasianinae</taxon>
        <taxon>Gallus</taxon>
    </lineage>
</organism>
<keyword id="KW-0963">Cytoplasm</keyword>
<keyword id="KW-1015">Disulfide bond</keyword>
<keyword id="KW-0249">Electron transport</keyword>
<keyword id="KW-0676">Redox-active center</keyword>
<keyword id="KW-1185">Reference proteome</keyword>
<keyword id="KW-0813">Transport</keyword>
<name>GLRX1_CHICK</name>
<dbReference type="EMBL" id="Y09235">
    <property type="protein sequence ID" value="CAA70437.1"/>
    <property type="molecule type" value="mRNA"/>
</dbReference>
<dbReference type="RefSeq" id="NP_990491.1">
    <property type="nucleotide sequence ID" value="NM_205160.1"/>
</dbReference>
<dbReference type="SMR" id="P79764"/>
<dbReference type="FunCoup" id="P79764">
    <property type="interactions" value="1400"/>
</dbReference>
<dbReference type="STRING" id="9031.ENSGALP00000023602"/>
<dbReference type="PaxDb" id="9031-ENSGALP00000043300"/>
<dbReference type="GeneID" id="396069"/>
<dbReference type="KEGG" id="gga:396069"/>
<dbReference type="CTD" id="2745"/>
<dbReference type="VEuPathDB" id="HostDB:geneid_396069"/>
<dbReference type="eggNOG" id="KOG1752">
    <property type="taxonomic scope" value="Eukaryota"/>
</dbReference>
<dbReference type="InParanoid" id="P79764"/>
<dbReference type="OrthoDB" id="418495at2759"/>
<dbReference type="PhylomeDB" id="P79764"/>
<dbReference type="PRO" id="PR:P79764"/>
<dbReference type="Proteomes" id="UP000000539">
    <property type="component" value="Unassembled WGS sequence"/>
</dbReference>
<dbReference type="GO" id="GO:0005737">
    <property type="term" value="C:cytoplasm"/>
    <property type="evidence" value="ECO:0007669"/>
    <property type="project" value="UniProtKB-SubCell"/>
</dbReference>
<dbReference type="GO" id="GO:0015038">
    <property type="term" value="F:glutathione disulfide oxidoreductase activity"/>
    <property type="evidence" value="ECO:0000318"/>
    <property type="project" value="GO_Central"/>
</dbReference>
<dbReference type="CDD" id="cd03419">
    <property type="entry name" value="GRX_GRXh_1_2_like"/>
    <property type="match status" value="1"/>
</dbReference>
<dbReference type="Gene3D" id="3.40.30.10">
    <property type="entry name" value="Glutaredoxin"/>
    <property type="match status" value="1"/>
</dbReference>
<dbReference type="InterPro" id="IPR011767">
    <property type="entry name" value="GLR_AS"/>
</dbReference>
<dbReference type="InterPro" id="IPR047185">
    <property type="entry name" value="GLRX1"/>
</dbReference>
<dbReference type="InterPro" id="IPR002109">
    <property type="entry name" value="Glutaredoxin"/>
</dbReference>
<dbReference type="InterPro" id="IPR014025">
    <property type="entry name" value="Glutaredoxin_subgr"/>
</dbReference>
<dbReference type="InterPro" id="IPR036249">
    <property type="entry name" value="Thioredoxin-like_sf"/>
</dbReference>
<dbReference type="PANTHER" id="PTHR46185">
    <property type="entry name" value="GLUTAREDOXIN-1"/>
    <property type="match status" value="1"/>
</dbReference>
<dbReference type="PANTHER" id="PTHR46185:SF1">
    <property type="entry name" value="GLUTAREDOXIN-1"/>
    <property type="match status" value="1"/>
</dbReference>
<dbReference type="Pfam" id="PF00462">
    <property type="entry name" value="Glutaredoxin"/>
    <property type="match status" value="1"/>
</dbReference>
<dbReference type="PRINTS" id="PR00160">
    <property type="entry name" value="GLUTAREDOXIN"/>
</dbReference>
<dbReference type="SUPFAM" id="SSF52833">
    <property type="entry name" value="Thioredoxin-like"/>
    <property type="match status" value="1"/>
</dbReference>
<dbReference type="PROSITE" id="PS00195">
    <property type="entry name" value="GLUTAREDOXIN_1"/>
    <property type="match status" value="1"/>
</dbReference>
<dbReference type="PROSITE" id="PS51354">
    <property type="entry name" value="GLUTAREDOXIN_2"/>
    <property type="match status" value="1"/>
</dbReference>
<feature type="chain" id="PRO_0000141605" description="Glutaredoxin-1">
    <location>
        <begin position="1"/>
        <end position="101"/>
    </location>
</feature>
<feature type="domain" description="Glutaredoxin" evidence="2">
    <location>
        <begin position="3"/>
        <end position="101"/>
    </location>
</feature>
<feature type="disulfide bond" description="Redox-active" evidence="1">
    <location>
        <begin position="23"/>
        <end position="26"/>
    </location>
</feature>
<reference key="1">
    <citation type="journal article" date="1998" name="Oncogene">
        <title>Glutaredoxin is a direct target of oncogenic jun.</title>
        <authorList>
            <person name="Goller M.E."/>
            <person name="Iacovoni J.S."/>
            <person name="Vogt P.K."/>
            <person name="Kruse U."/>
        </authorList>
    </citation>
    <scope>NUCLEOTIDE SEQUENCE [MRNA]</scope>
</reference>